<reference key="1">
    <citation type="journal article" date="2002" name="Science">
        <title>50 million years of genomic stasis in endosymbiotic bacteria.</title>
        <authorList>
            <person name="Tamas I."/>
            <person name="Klasson L."/>
            <person name="Canbaeck B."/>
            <person name="Naeslund A.K."/>
            <person name="Eriksson A.-S."/>
            <person name="Wernegreen J.J."/>
            <person name="Sandstroem J.P."/>
            <person name="Moran N.A."/>
            <person name="Andersson S.G.E."/>
        </authorList>
    </citation>
    <scope>NUCLEOTIDE SEQUENCE [LARGE SCALE GENOMIC DNA]</scope>
    <source>
        <strain>Sg</strain>
    </source>
</reference>
<dbReference type="EMBL" id="AE013218">
    <property type="protein sequence ID" value="AAM68015.1"/>
    <property type="molecule type" value="Genomic_DNA"/>
</dbReference>
<dbReference type="RefSeq" id="WP_011053982.1">
    <property type="nucleotide sequence ID" value="NC_004061.1"/>
</dbReference>
<dbReference type="SMR" id="Q8K978"/>
<dbReference type="STRING" id="198804.BUsg_472"/>
<dbReference type="GeneID" id="93003944"/>
<dbReference type="KEGG" id="bas:BUsg_472"/>
<dbReference type="eggNOG" id="COG2921">
    <property type="taxonomic scope" value="Bacteria"/>
</dbReference>
<dbReference type="HOGENOM" id="CLU_161438_2_1_6"/>
<dbReference type="Proteomes" id="UP000000416">
    <property type="component" value="Chromosome"/>
</dbReference>
<dbReference type="GO" id="GO:0005829">
    <property type="term" value="C:cytosol"/>
    <property type="evidence" value="ECO:0007669"/>
    <property type="project" value="TreeGrafter"/>
</dbReference>
<dbReference type="Gene3D" id="3.30.70.260">
    <property type="match status" value="1"/>
</dbReference>
<dbReference type="HAMAP" id="MF_00659">
    <property type="entry name" value="UPF0250"/>
    <property type="match status" value="1"/>
</dbReference>
<dbReference type="InterPro" id="IPR007454">
    <property type="entry name" value="UPF0250_YbeD-like"/>
</dbReference>
<dbReference type="InterPro" id="IPR027471">
    <property type="entry name" value="YbeD-like_sf"/>
</dbReference>
<dbReference type="NCBIfam" id="NF003447">
    <property type="entry name" value="PRK04998.1"/>
    <property type="match status" value="1"/>
</dbReference>
<dbReference type="PANTHER" id="PTHR38036">
    <property type="entry name" value="UPF0250 PROTEIN YBED"/>
    <property type="match status" value="1"/>
</dbReference>
<dbReference type="PANTHER" id="PTHR38036:SF1">
    <property type="entry name" value="UPF0250 PROTEIN YBED"/>
    <property type="match status" value="1"/>
</dbReference>
<dbReference type="Pfam" id="PF04359">
    <property type="entry name" value="DUF493"/>
    <property type="match status" value="1"/>
</dbReference>
<dbReference type="SUPFAM" id="SSF117991">
    <property type="entry name" value="YbeD/HP0495-like"/>
    <property type="match status" value="1"/>
</dbReference>
<protein>
    <recommendedName>
        <fullName>UPF0250 protein BUsg_472</fullName>
    </recommendedName>
</protein>
<feature type="chain" id="PRO_0000209293" description="UPF0250 protein BUsg_472">
    <location>
        <begin position="1"/>
        <end position="87"/>
    </location>
</feature>
<name>Y472_BUCAP</name>
<gene>
    <name type="ordered locus">BUsg_472</name>
</gene>
<organism>
    <name type="scientific">Buchnera aphidicola subsp. Schizaphis graminum (strain Sg)</name>
    <dbReference type="NCBI Taxonomy" id="198804"/>
    <lineage>
        <taxon>Bacteria</taxon>
        <taxon>Pseudomonadati</taxon>
        <taxon>Pseudomonadota</taxon>
        <taxon>Gammaproteobacteria</taxon>
        <taxon>Enterobacterales</taxon>
        <taxon>Erwiniaceae</taxon>
        <taxon>Buchnera</taxon>
    </lineage>
</organism>
<sequence>MKTKLREMLKFPCFFTYKIIGLAQPELVDQIIKVIQIQIPGDYTPQVKSSNRGNYLSVSITICAKNFEQIETLYHDISKINMVRMVL</sequence>
<accession>Q8K978</accession>
<comment type="similarity">
    <text evidence="1">Belongs to the UPF0250 family.</text>
</comment>
<evidence type="ECO:0000305" key="1"/>
<proteinExistence type="inferred from homology"/>